<gene>
    <name evidence="1" type="primary">atpF</name>
    <name type="ordered locus">SaurJH9_2143</name>
</gene>
<sequence>MTETANLFVLGAAGGVEWGTVIVQVLTFIVLLALLKKFAWGPLKDVMDKRERDINRDIDDAEQAKLNAQKLEEENKQKLKETQEEVQKILEDAKVQARQQQEQIIHEANVRANGMIETAQSEINSQKERAIADINNQVSELSVLIASKVLRKEISEQDQKALVDKYLKEAGDK</sequence>
<keyword id="KW-0066">ATP synthesis</keyword>
<keyword id="KW-1003">Cell membrane</keyword>
<keyword id="KW-0138">CF(0)</keyword>
<keyword id="KW-0375">Hydrogen ion transport</keyword>
<keyword id="KW-0406">Ion transport</keyword>
<keyword id="KW-0472">Membrane</keyword>
<keyword id="KW-0812">Transmembrane</keyword>
<keyword id="KW-1133">Transmembrane helix</keyword>
<keyword id="KW-0813">Transport</keyword>
<comment type="function">
    <text evidence="1">F(1)F(0) ATP synthase produces ATP from ADP in the presence of a proton or sodium gradient. F-type ATPases consist of two structural domains, F(1) containing the extramembraneous catalytic core and F(0) containing the membrane proton channel, linked together by a central stalk and a peripheral stalk. During catalysis, ATP synthesis in the catalytic domain of F(1) is coupled via a rotary mechanism of the central stalk subunits to proton translocation.</text>
</comment>
<comment type="function">
    <text evidence="1">Component of the F(0) channel, it forms part of the peripheral stalk, linking F(1) to F(0).</text>
</comment>
<comment type="subunit">
    <text evidence="1">F-type ATPases have 2 components, F(1) - the catalytic core - and F(0) - the membrane proton channel. F(1) has five subunits: alpha(3), beta(3), gamma(1), delta(1), epsilon(1). F(0) has three main subunits: a(1), b(2) and c(10-14). The alpha and beta chains form an alternating ring which encloses part of the gamma chain. F(1) is attached to F(0) by a central stalk formed by the gamma and epsilon chains, while a peripheral stalk is formed by the delta and b chains.</text>
</comment>
<comment type="subcellular location">
    <subcellularLocation>
        <location evidence="1">Cell membrane</location>
        <topology evidence="1">Single-pass membrane protein</topology>
    </subcellularLocation>
</comment>
<comment type="similarity">
    <text evidence="1">Belongs to the ATPase B chain family.</text>
</comment>
<accession>A5IUQ2</accession>
<dbReference type="EMBL" id="CP000703">
    <property type="protein sequence ID" value="ABQ49925.1"/>
    <property type="molecule type" value="Genomic_DNA"/>
</dbReference>
<dbReference type="RefSeq" id="WP_000140679.1">
    <property type="nucleotide sequence ID" value="NC_009487.1"/>
</dbReference>
<dbReference type="SMR" id="A5IUQ2"/>
<dbReference type="KEGG" id="saj:SaurJH9_2143"/>
<dbReference type="HOGENOM" id="CLU_079215_4_2_9"/>
<dbReference type="GO" id="GO:0005886">
    <property type="term" value="C:plasma membrane"/>
    <property type="evidence" value="ECO:0007669"/>
    <property type="project" value="UniProtKB-SubCell"/>
</dbReference>
<dbReference type="GO" id="GO:0045259">
    <property type="term" value="C:proton-transporting ATP synthase complex"/>
    <property type="evidence" value="ECO:0007669"/>
    <property type="project" value="UniProtKB-KW"/>
</dbReference>
<dbReference type="GO" id="GO:0046933">
    <property type="term" value="F:proton-transporting ATP synthase activity, rotational mechanism"/>
    <property type="evidence" value="ECO:0007669"/>
    <property type="project" value="UniProtKB-UniRule"/>
</dbReference>
<dbReference type="GO" id="GO:0046961">
    <property type="term" value="F:proton-transporting ATPase activity, rotational mechanism"/>
    <property type="evidence" value="ECO:0007669"/>
    <property type="project" value="TreeGrafter"/>
</dbReference>
<dbReference type="CDD" id="cd06503">
    <property type="entry name" value="ATP-synt_Fo_b"/>
    <property type="match status" value="1"/>
</dbReference>
<dbReference type="HAMAP" id="MF_01398">
    <property type="entry name" value="ATP_synth_b_bprime"/>
    <property type="match status" value="1"/>
</dbReference>
<dbReference type="InterPro" id="IPR028987">
    <property type="entry name" value="ATP_synth_B-like_membr_sf"/>
</dbReference>
<dbReference type="InterPro" id="IPR002146">
    <property type="entry name" value="ATP_synth_b/b'su_bac/chlpt"/>
</dbReference>
<dbReference type="InterPro" id="IPR005864">
    <property type="entry name" value="ATP_synth_F0_bsu_bac"/>
</dbReference>
<dbReference type="InterPro" id="IPR050059">
    <property type="entry name" value="ATP_synthase_B_chain"/>
</dbReference>
<dbReference type="NCBIfam" id="TIGR01144">
    <property type="entry name" value="ATP_synt_b"/>
    <property type="match status" value="1"/>
</dbReference>
<dbReference type="NCBIfam" id="NF009987">
    <property type="entry name" value="PRK13453.1"/>
    <property type="match status" value="1"/>
</dbReference>
<dbReference type="PANTHER" id="PTHR33445:SF1">
    <property type="entry name" value="ATP SYNTHASE SUBUNIT B"/>
    <property type="match status" value="1"/>
</dbReference>
<dbReference type="PANTHER" id="PTHR33445">
    <property type="entry name" value="ATP SYNTHASE SUBUNIT B', CHLOROPLASTIC"/>
    <property type="match status" value="1"/>
</dbReference>
<dbReference type="Pfam" id="PF00430">
    <property type="entry name" value="ATP-synt_B"/>
    <property type="match status" value="1"/>
</dbReference>
<dbReference type="SUPFAM" id="SSF81573">
    <property type="entry name" value="F1F0 ATP synthase subunit B, membrane domain"/>
    <property type="match status" value="1"/>
</dbReference>
<evidence type="ECO:0000255" key="1">
    <source>
        <dbReference type="HAMAP-Rule" id="MF_01398"/>
    </source>
</evidence>
<proteinExistence type="inferred from homology"/>
<feature type="chain" id="PRO_0000368784" description="ATP synthase subunit b">
    <location>
        <begin position="1"/>
        <end position="173"/>
    </location>
</feature>
<feature type="transmembrane region" description="Helical" evidence="1">
    <location>
        <begin position="15"/>
        <end position="35"/>
    </location>
</feature>
<reference key="1">
    <citation type="submission" date="2007-05" db="EMBL/GenBank/DDBJ databases">
        <title>Complete sequence of chromosome of Staphylococcus aureus subsp. aureus JH9.</title>
        <authorList>
            <consortium name="US DOE Joint Genome Institute"/>
            <person name="Copeland A."/>
            <person name="Lucas S."/>
            <person name="Lapidus A."/>
            <person name="Barry K."/>
            <person name="Detter J.C."/>
            <person name="Glavina del Rio T."/>
            <person name="Hammon N."/>
            <person name="Israni S."/>
            <person name="Pitluck S."/>
            <person name="Chain P."/>
            <person name="Malfatti S."/>
            <person name="Shin M."/>
            <person name="Vergez L."/>
            <person name="Schmutz J."/>
            <person name="Larimer F."/>
            <person name="Land M."/>
            <person name="Hauser L."/>
            <person name="Kyrpides N."/>
            <person name="Kim E."/>
            <person name="Tomasz A."/>
            <person name="Richardson P."/>
        </authorList>
    </citation>
    <scope>NUCLEOTIDE SEQUENCE [LARGE SCALE GENOMIC DNA]</scope>
    <source>
        <strain>JH9</strain>
    </source>
</reference>
<protein>
    <recommendedName>
        <fullName evidence="1">ATP synthase subunit b</fullName>
    </recommendedName>
    <alternativeName>
        <fullName evidence="1">ATP synthase F(0) sector subunit b</fullName>
    </alternativeName>
    <alternativeName>
        <fullName evidence="1">ATPase subunit I</fullName>
    </alternativeName>
    <alternativeName>
        <fullName evidence="1">F-type ATPase subunit b</fullName>
        <shortName evidence="1">F-ATPase subunit b</shortName>
    </alternativeName>
</protein>
<name>ATPF_STAA9</name>
<organism>
    <name type="scientific">Staphylococcus aureus (strain JH9)</name>
    <dbReference type="NCBI Taxonomy" id="359786"/>
    <lineage>
        <taxon>Bacteria</taxon>
        <taxon>Bacillati</taxon>
        <taxon>Bacillota</taxon>
        <taxon>Bacilli</taxon>
        <taxon>Bacillales</taxon>
        <taxon>Staphylococcaceae</taxon>
        <taxon>Staphylococcus</taxon>
    </lineage>
</organism>